<dbReference type="EC" id="1.14.11.73" evidence="1"/>
<dbReference type="EC" id="3.4.-.-" evidence="1"/>
<dbReference type="EMBL" id="AK014006">
    <property type="protein sequence ID" value="BAB29111.1"/>
    <property type="molecule type" value="mRNA"/>
</dbReference>
<dbReference type="EMBL" id="BC024807">
    <property type="protein sequence ID" value="AAH24807.1"/>
    <property type="molecule type" value="mRNA"/>
</dbReference>
<dbReference type="CCDS" id="CCDS21821.1"/>
<dbReference type="RefSeq" id="NP_084118.1">
    <property type="nucleotide sequence ID" value="NM_029842.5"/>
</dbReference>
<dbReference type="SMR" id="Q9CXT6"/>
<dbReference type="FunCoup" id="Q9CXT6">
    <property type="interactions" value="2445"/>
</dbReference>
<dbReference type="STRING" id="10090.ENSMUSP00000033010"/>
<dbReference type="iPTMnet" id="Q9CXT6"/>
<dbReference type="PhosphoSitePlus" id="Q9CXT6"/>
<dbReference type="PaxDb" id="10090-ENSMUSP00000033010"/>
<dbReference type="ProteomicsDB" id="268972"/>
<dbReference type="Pumba" id="Q9CXT6"/>
<dbReference type="Antibodypedia" id="12808">
    <property type="antibodies" value="311 antibodies from 32 providers"/>
</dbReference>
<dbReference type="Ensembl" id="ENSMUST00000033010.9">
    <property type="protein sequence ID" value="ENSMUSP00000033010.3"/>
    <property type="gene ID" value="ENSMUSG00000030752.9"/>
</dbReference>
<dbReference type="GeneID" id="77035"/>
<dbReference type="KEGG" id="mmu:77035"/>
<dbReference type="UCSC" id="uc009jpz.2">
    <property type="organism name" value="mouse"/>
</dbReference>
<dbReference type="AGR" id="MGI:1924285"/>
<dbReference type="CTD" id="79831"/>
<dbReference type="MGI" id="MGI:1924285">
    <property type="gene designation" value="Kdm8"/>
</dbReference>
<dbReference type="VEuPathDB" id="HostDB:ENSMUSG00000030752"/>
<dbReference type="eggNOG" id="KOG2132">
    <property type="taxonomic scope" value="Eukaryota"/>
</dbReference>
<dbReference type="GeneTree" id="ENSGT00940000158074"/>
<dbReference type="HOGENOM" id="CLU_016785_0_3_1"/>
<dbReference type="InParanoid" id="Q9CXT6"/>
<dbReference type="OMA" id="KASYQEC"/>
<dbReference type="OrthoDB" id="47172at2759"/>
<dbReference type="PhylomeDB" id="Q9CXT6"/>
<dbReference type="TreeFam" id="TF315056"/>
<dbReference type="Reactome" id="R-MMU-9629569">
    <property type="pathway name" value="Protein hydroxylation"/>
</dbReference>
<dbReference type="BioGRID-ORCS" id="77035">
    <property type="hits" value="28 hits in 83 CRISPR screens"/>
</dbReference>
<dbReference type="PRO" id="PR:Q9CXT6"/>
<dbReference type="Proteomes" id="UP000000589">
    <property type="component" value="Chromosome 7"/>
</dbReference>
<dbReference type="RNAct" id="Q9CXT6">
    <property type="molecule type" value="protein"/>
</dbReference>
<dbReference type="Bgee" id="ENSMUSG00000030752">
    <property type="expression patterns" value="Expressed in pigmented layer of retina and 210 other cell types or tissues"/>
</dbReference>
<dbReference type="ExpressionAtlas" id="Q9CXT6">
    <property type="expression patterns" value="baseline and differential"/>
</dbReference>
<dbReference type="GO" id="GO:0005694">
    <property type="term" value="C:chromosome"/>
    <property type="evidence" value="ECO:0007669"/>
    <property type="project" value="UniProtKB-SubCell"/>
</dbReference>
<dbReference type="GO" id="GO:0005829">
    <property type="term" value="C:cytosol"/>
    <property type="evidence" value="ECO:0007669"/>
    <property type="project" value="Ensembl"/>
</dbReference>
<dbReference type="GO" id="GO:0005654">
    <property type="term" value="C:nucleoplasm"/>
    <property type="evidence" value="ECO:0007669"/>
    <property type="project" value="Ensembl"/>
</dbReference>
<dbReference type="GO" id="GO:0005634">
    <property type="term" value="C:nucleus"/>
    <property type="evidence" value="ECO:0000250"/>
    <property type="project" value="UniProtKB"/>
</dbReference>
<dbReference type="GO" id="GO:0004177">
    <property type="term" value="F:aminopeptidase activity"/>
    <property type="evidence" value="ECO:0007669"/>
    <property type="project" value="UniProtKB-KW"/>
</dbReference>
<dbReference type="GO" id="GO:0003682">
    <property type="term" value="F:chromatin binding"/>
    <property type="evidence" value="ECO:0000314"/>
    <property type="project" value="MGI"/>
</dbReference>
<dbReference type="GO" id="GO:0004175">
    <property type="term" value="F:endopeptidase activity"/>
    <property type="evidence" value="ECO:0007669"/>
    <property type="project" value="Ensembl"/>
</dbReference>
<dbReference type="GO" id="GO:0051864">
    <property type="term" value="F:histone H3K36 demethylase activity"/>
    <property type="evidence" value="ECO:0000250"/>
    <property type="project" value="UniProtKB"/>
</dbReference>
<dbReference type="GO" id="GO:0046872">
    <property type="term" value="F:metal ion binding"/>
    <property type="evidence" value="ECO:0007669"/>
    <property type="project" value="UniProtKB-KW"/>
</dbReference>
<dbReference type="GO" id="GO:0035064">
    <property type="term" value="F:methylated histone binding"/>
    <property type="evidence" value="ECO:0007669"/>
    <property type="project" value="Ensembl"/>
</dbReference>
<dbReference type="GO" id="GO:0002039">
    <property type="term" value="F:p53 binding"/>
    <property type="evidence" value="ECO:0000314"/>
    <property type="project" value="MGI"/>
</dbReference>
<dbReference type="GO" id="GO:0106157">
    <property type="term" value="F:peptidyl-arginine 3-dioxygenase activity"/>
    <property type="evidence" value="ECO:0000250"/>
    <property type="project" value="UniProtKB"/>
</dbReference>
<dbReference type="GO" id="GO:0032922">
    <property type="term" value="P:circadian regulation of gene expression"/>
    <property type="evidence" value="ECO:0000315"/>
    <property type="project" value="UniProtKB"/>
</dbReference>
<dbReference type="GO" id="GO:0048144">
    <property type="term" value="P:fibroblast proliferation"/>
    <property type="evidence" value="ECO:0000315"/>
    <property type="project" value="MGI"/>
</dbReference>
<dbReference type="GO" id="GO:0000086">
    <property type="term" value="P:G2/M transition of mitotic cell cycle"/>
    <property type="evidence" value="ECO:0000250"/>
    <property type="project" value="UniProtKB"/>
</dbReference>
<dbReference type="GO" id="GO:0001701">
    <property type="term" value="P:in utero embryonic development"/>
    <property type="evidence" value="ECO:0000316"/>
    <property type="project" value="MGI"/>
</dbReference>
<dbReference type="GO" id="GO:0045892">
    <property type="term" value="P:negative regulation of DNA-templated transcription"/>
    <property type="evidence" value="ECO:0000250"/>
    <property type="project" value="UniProtKB"/>
</dbReference>
<dbReference type="GO" id="GO:0045893">
    <property type="term" value="P:positive regulation of DNA-templated transcription"/>
    <property type="evidence" value="ECO:0000250"/>
    <property type="project" value="UniProtKB"/>
</dbReference>
<dbReference type="GO" id="GO:0031648">
    <property type="term" value="P:protein destabilization"/>
    <property type="evidence" value="ECO:0000315"/>
    <property type="project" value="UniProtKB"/>
</dbReference>
<dbReference type="GO" id="GO:0006508">
    <property type="term" value="P:proteolysis"/>
    <property type="evidence" value="ECO:0007669"/>
    <property type="project" value="UniProtKB-KW"/>
</dbReference>
<dbReference type="GO" id="GO:1901796">
    <property type="term" value="P:regulation of signal transduction by p53 class mediator"/>
    <property type="evidence" value="ECO:0000315"/>
    <property type="project" value="MGI"/>
</dbReference>
<dbReference type="FunFam" id="2.60.120.650:FF:000019">
    <property type="entry name" value="Bifunctional peptidase and arginyl-hydroxylase JMJD5"/>
    <property type="match status" value="1"/>
</dbReference>
<dbReference type="Gene3D" id="2.60.120.650">
    <property type="entry name" value="Cupin"/>
    <property type="match status" value="1"/>
</dbReference>
<dbReference type="InterPro" id="IPR056520">
    <property type="entry name" value="ARM_KDM8_N"/>
</dbReference>
<dbReference type="InterPro" id="IPR041667">
    <property type="entry name" value="Cupin_8"/>
</dbReference>
<dbReference type="InterPro" id="IPR003347">
    <property type="entry name" value="JmjC_dom"/>
</dbReference>
<dbReference type="PANTHER" id="PTHR12461:SF106">
    <property type="entry name" value="BIFUNCTIONAL PEPTIDASE AND ARGINYL-HYDROXYLASE JMJD5"/>
    <property type="match status" value="1"/>
</dbReference>
<dbReference type="PANTHER" id="PTHR12461">
    <property type="entry name" value="HYPOXIA-INDUCIBLE FACTOR 1 ALPHA INHIBITOR-RELATED"/>
    <property type="match status" value="1"/>
</dbReference>
<dbReference type="Pfam" id="PF24472">
    <property type="entry name" value="ARM_KDM8_N"/>
    <property type="match status" value="1"/>
</dbReference>
<dbReference type="Pfam" id="PF13621">
    <property type="entry name" value="Cupin_8"/>
    <property type="match status" value="1"/>
</dbReference>
<dbReference type="SMART" id="SM00558">
    <property type="entry name" value="JmjC"/>
    <property type="match status" value="1"/>
</dbReference>
<dbReference type="SUPFAM" id="SSF51197">
    <property type="entry name" value="Clavaminate synthase-like"/>
    <property type="match status" value="1"/>
</dbReference>
<dbReference type="PROSITE" id="PS51184">
    <property type="entry name" value="JMJC"/>
    <property type="match status" value="1"/>
</dbReference>
<accession>Q9CXT6</accession>
<protein>
    <recommendedName>
        <fullName evidence="1">Bifunctional peptidase and arginyl-hydroxylase JMJD5</fullName>
        <ecNumber evidence="1">1.14.11.73</ecNumber>
        <ecNumber evidence="1">3.4.-.-</ecNumber>
    </recommendedName>
    <alternativeName>
        <fullName evidence="1">JmjC domain-containing protein 5</fullName>
    </alternativeName>
    <alternativeName>
        <fullName evidence="1">Jumonji C domain-containing protein 5</fullName>
    </alternativeName>
    <alternativeName>
        <fullName evidence="1">L-arginine (3R)-hydroxylase KDM8</fullName>
    </alternativeName>
    <alternativeName>
        <fullName>Lysine-specific demethylase 8</fullName>
    </alternativeName>
</protein>
<gene>
    <name evidence="5" type="primary">Kdm8</name>
    <name evidence="1" type="synonym">Jmjd5</name>
</gene>
<proteinExistence type="evidence at protein level"/>
<evidence type="ECO:0000250" key="1">
    <source>
        <dbReference type="UniProtKB" id="Q8N371"/>
    </source>
</evidence>
<evidence type="ECO:0000255" key="2">
    <source>
        <dbReference type="PROSITE-ProRule" id="PRU00538"/>
    </source>
</evidence>
<evidence type="ECO:0000256" key="3">
    <source>
        <dbReference type="SAM" id="MobiDB-lite"/>
    </source>
</evidence>
<evidence type="ECO:0000269" key="4">
    <source>
    </source>
</evidence>
<evidence type="ECO:0000312" key="5">
    <source>
        <dbReference type="MGI" id="MGI:1924285"/>
    </source>
</evidence>
<organism>
    <name type="scientific">Mus musculus</name>
    <name type="common">Mouse</name>
    <dbReference type="NCBI Taxonomy" id="10090"/>
    <lineage>
        <taxon>Eukaryota</taxon>
        <taxon>Metazoa</taxon>
        <taxon>Chordata</taxon>
        <taxon>Craniata</taxon>
        <taxon>Vertebrata</taxon>
        <taxon>Euteleostomi</taxon>
        <taxon>Mammalia</taxon>
        <taxon>Eutheria</taxon>
        <taxon>Euarchontoglires</taxon>
        <taxon>Glires</taxon>
        <taxon>Rodentia</taxon>
        <taxon>Myomorpha</taxon>
        <taxon>Muroidea</taxon>
        <taxon>Muridae</taxon>
        <taxon>Murinae</taxon>
        <taxon>Mus</taxon>
        <taxon>Mus</taxon>
    </lineage>
</organism>
<reference key="1">
    <citation type="journal article" date="2005" name="Science">
        <title>The transcriptional landscape of the mammalian genome.</title>
        <authorList>
            <person name="Carninci P."/>
            <person name="Kasukawa T."/>
            <person name="Katayama S."/>
            <person name="Gough J."/>
            <person name="Frith M.C."/>
            <person name="Maeda N."/>
            <person name="Oyama R."/>
            <person name="Ravasi T."/>
            <person name="Lenhard B."/>
            <person name="Wells C."/>
            <person name="Kodzius R."/>
            <person name="Shimokawa K."/>
            <person name="Bajic V.B."/>
            <person name="Brenner S.E."/>
            <person name="Batalov S."/>
            <person name="Forrest A.R."/>
            <person name="Zavolan M."/>
            <person name="Davis M.J."/>
            <person name="Wilming L.G."/>
            <person name="Aidinis V."/>
            <person name="Allen J.E."/>
            <person name="Ambesi-Impiombato A."/>
            <person name="Apweiler R."/>
            <person name="Aturaliya R.N."/>
            <person name="Bailey T.L."/>
            <person name="Bansal M."/>
            <person name="Baxter L."/>
            <person name="Beisel K.W."/>
            <person name="Bersano T."/>
            <person name="Bono H."/>
            <person name="Chalk A.M."/>
            <person name="Chiu K.P."/>
            <person name="Choudhary V."/>
            <person name="Christoffels A."/>
            <person name="Clutterbuck D.R."/>
            <person name="Crowe M.L."/>
            <person name="Dalla E."/>
            <person name="Dalrymple B.P."/>
            <person name="de Bono B."/>
            <person name="Della Gatta G."/>
            <person name="di Bernardo D."/>
            <person name="Down T."/>
            <person name="Engstrom P."/>
            <person name="Fagiolini M."/>
            <person name="Faulkner G."/>
            <person name="Fletcher C.F."/>
            <person name="Fukushima T."/>
            <person name="Furuno M."/>
            <person name="Futaki S."/>
            <person name="Gariboldi M."/>
            <person name="Georgii-Hemming P."/>
            <person name="Gingeras T.R."/>
            <person name="Gojobori T."/>
            <person name="Green R.E."/>
            <person name="Gustincich S."/>
            <person name="Harbers M."/>
            <person name="Hayashi Y."/>
            <person name="Hensch T.K."/>
            <person name="Hirokawa N."/>
            <person name="Hill D."/>
            <person name="Huminiecki L."/>
            <person name="Iacono M."/>
            <person name="Ikeo K."/>
            <person name="Iwama A."/>
            <person name="Ishikawa T."/>
            <person name="Jakt M."/>
            <person name="Kanapin A."/>
            <person name="Katoh M."/>
            <person name="Kawasawa Y."/>
            <person name="Kelso J."/>
            <person name="Kitamura H."/>
            <person name="Kitano H."/>
            <person name="Kollias G."/>
            <person name="Krishnan S.P."/>
            <person name="Kruger A."/>
            <person name="Kummerfeld S.K."/>
            <person name="Kurochkin I.V."/>
            <person name="Lareau L.F."/>
            <person name="Lazarevic D."/>
            <person name="Lipovich L."/>
            <person name="Liu J."/>
            <person name="Liuni S."/>
            <person name="McWilliam S."/>
            <person name="Madan Babu M."/>
            <person name="Madera M."/>
            <person name="Marchionni L."/>
            <person name="Matsuda H."/>
            <person name="Matsuzawa S."/>
            <person name="Miki H."/>
            <person name="Mignone F."/>
            <person name="Miyake S."/>
            <person name="Morris K."/>
            <person name="Mottagui-Tabar S."/>
            <person name="Mulder N."/>
            <person name="Nakano N."/>
            <person name="Nakauchi H."/>
            <person name="Ng P."/>
            <person name="Nilsson R."/>
            <person name="Nishiguchi S."/>
            <person name="Nishikawa S."/>
            <person name="Nori F."/>
            <person name="Ohara O."/>
            <person name="Okazaki Y."/>
            <person name="Orlando V."/>
            <person name="Pang K.C."/>
            <person name="Pavan W.J."/>
            <person name="Pavesi G."/>
            <person name="Pesole G."/>
            <person name="Petrovsky N."/>
            <person name="Piazza S."/>
            <person name="Reed J."/>
            <person name="Reid J.F."/>
            <person name="Ring B.Z."/>
            <person name="Ringwald M."/>
            <person name="Rost B."/>
            <person name="Ruan Y."/>
            <person name="Salzberg S.L."/>
            <person name="Sandelin A."/>
            <person name="Schneider C."/>
            <person name="Schoenbach C."/>
            <person name="Sekiguchi K."/>
            <person name="Semple C.A."/>
            <person name="Seno S."/>
            <person name="Sessa L."/>
            <person name="Sheng Y."/>
            <person name="Shibata Y."/>
            <person name="Shimada H."/>
            <person name="Shimada K."/>
            <person name="Silva D."/>
            <person name="Sinclair B."/>
            <person name="Sperling S."/>
            <person name="Stupka E."/>
            <person name="Sugiura K."/>
            <person name="Sultana R."/>
            <person name="Takenaka Y."/>
            <person name="Taki K."/>
            <person name="Tammoja K."/>
            <person name="Tan S.L."/>
            <person name="Tang S."/>
            <person name="Taylor M.S."/>
            <person name="Tegner J."/>
            <person name="Teichmann S.A."/>
            <person name="Ueda H.R."/>
            <person name="van Nimwegen E."/>
            <person name="Verardo R."/>
            <person name="Wei C.L."/>
            <person name="Yagi K."/>
            <person name="Yamanishi H."/>
            <person name="Zabarovsky E."/>
            <person name="Zhu S."/>
            <person name="Zimmer A."/>
            <person name="Hide W."/>
            <person name="Bult C."/>
            <person name="Grimmond S.M."/>
            <person name="Teasdale R.D."/>
            <person name="Liu E.T."/>
            <person name="Brusic V."/>
            <person name="Quackenbush J."/>
            <person name="Wahlestedt C."/>
            <person name="Mattick J.S."/>
            <person name="Hume D.A."/>
            <person name="Kai C."/>
            <person name="Sasaki D."/>
            <person name="Tomaru Y."/>
            <person name="Fukuda S."/>
            <person name="Kanamori-Katayama M."/>
            <person name="Suzuki M."/>
            <person name="Aoki J."/>
            <person name="Arakawa T."/>
            <person name="Iida J."/>
            <person name="Imamura K."/>
            <person name="Itoh M."/>
            <person name="Kato T."/>
            <person name="Kawaji H."/>
            <person name="Kawagashira N."/>
            <person name="Kawashima T."/>
            <person name="Kojima M."/>
            <person name="Kondo S."/>
            <person name="Konno H."/>
            <person name="Nakano K."/>
            <person name="Ninomiya N."/>
            <person name="Nishio T."/>
            <person name="Okada M."/>
            <person name="Plessy C."/>
            <person name="Shibata K."/>
            <person name="Shiraki T."/>
            <person name="Suzuki S."/>
            <person name="Tagami M."/>
            <person name="Waki K."/>
            <person name="Watahiki A."/>
            <person name="Okamura-Oho Y."/>
            <person name="Suzuki H."/>
            <person name="Kawai J."/>
            <person name="Hayashizaki Y."/>
        </authorList>
    </citation>
    <scope>NUCLEOTIDE SEQUENCE [LARGE SCALE MRNA]</scope>
    <source>
        <strain>C57BL/6J</strain>
        <tissue>Head</tissue>
    </source>
</reference>
<reference key="2">
    <citation type="journal article" date="2004" name="Genome Res.">
        <title>The status, quality, and expansion of the NIH full-length cDNA project: the Mammalian Gene Collection (MGC).</title>
        <authorList>
            <consortium name="The MGC Project Team"/>
        </authorList>
    </citation>
    <scope>NUCLEOTIDE SEQUENCE [LARGE SCALE MRNA]</scope>
    <source>
        <strain>FVB/N</strain>
        <tissue>Mammary tumor</tissue>
    </source>
</reference>
<reference key="3">
    <citation type="journal article" date="2018" name="PLoS Biol.">
        <title>JMJD5 links CRY1 function and proteasomal degradation.</title>
        <authorList>
            <person name="Saran A.R."/>
            <person name="Kalinowska D."/>
            <person name="Oh S."/>
            <person name="Janknecht R."/>
            <person name="DiTacchio L."/>
        </authorList>
    </citation>
    <scope>FUNCTION</scope>
    <scope>DISRUPTION PHENOTYPE</scope>
    <scope>INTERACTION WITH CRY1; FBXL3 AND PSMD2</scope>
    <scope>TISSUE SPECIFICITY</scope>
</reference>
<sequence length="414" mass="47145">MSEDTTEPLVGSSTLWKELRTLLPDKEEELKLDLGEKVDRSVAALLRQAVGLFYAGHWQGCLQASEAVLDYSWEKLNTGPWRDVDKEWRRVYSFGCLLKALCLCQAPQKATTVVEALRVCDMGLLMGAAILEDILLKVVAVLQTHQLPGKQPARGPHQDQPATKKAKCDASPAPDVMLERMVPRLRCPPLQYFKQHFLVPGRPVILEGVADHWPCMKKWSLQYIQEIAGCRTVPVEVGSRYTDEDWSQTLMTVDEFIQKFILSEAKDVGYLAQHQLFDQIPELKRDISIPDYCCLGNGEEEEITINAWFGPQGTISPLHQDPQQNFLVQVLGRKYIRLYSPQESEAVYPHETHILHNTSQVDVENPDLEKFPKFTEAPFLSCILSPGDTLFIPAKYWHYVRSLDLSFSVSFWWS</sequence>
<keyword id="KW-0031">Aminopeptidase</keyword>
<keyword id="KW-0090">Biological rhythms</keyword>
<keyword id="KW-0131">Cell cycle</keyword>
<keyword id="KW-0156">Chromatin regulator</keyword>
<keyword id="KW-0158">Chromosome</keyword>
<keyword id="KW-0223">Dioxygenase</keyword>
<keyword id="KW-0378">Hydrolase</keyword>
<keyword id="KW-0408">Iron</keyword>
<keyword id="KW-0479">Metal-binding</keyword>
<keyword id="KW-0539">Nucleus</keyword>
<keyword id="KW-0560">Oxidoreductase</keyword>
<keyword id="KW-0645">Protease</keyword>
<keyword id="KW-1185">Reference proteome</keyword>
<keyword id="KW-0804">Transcription</keyword>
<keyword id="KW-0805">Transcription regulation</keyword>
<feature type="chain" id="PRO_0000292011" description="Bifunctional peptidase and arginyl-hydroxylase JMJD5">
    <location>
        <begin position="1"/>
        <end position="414"/>
    </location>
</feature>
<feature type="domain" description="JmjC" evidence="2">
    <location>
        <begin position="269"/>
        <end position="414"/>
    </location>
</feature>
<feature type="region of interest" description="Interaction with RCCD1" evidence="1">
    <location>
        <begin position="1"/>
        <end position="107"/>
    </location>
</feature>
<feature type="region of interest" description="Disordered" evidence="3">
    <location>
        <begin position="148"/>
        <end position="169"/>
    </location>
</feature>
<feature type="binding site" evidence="1">
    <location>
        <position position="236"/>
    </location>
    <ligand>
        <name>a protein</name>
        <dbReference type="ChEBI" id="CHEBI:16541"/>
    </ligand>
    <ligandPart>
        <name>N(omega)-methyl-L-arginine residue</name>
        <dbReference type="ChEBI" id="CHEBI:65280"/>
    </ligandPart>
</feature>
<feature type="binding site" evidence="1">
    <location>
        <position position="270"/>
    </location>
    <ligand>
        <name>2-oxoglutarate</name>
        <dbReference type="ChEBI" id="CHEBI:16810"/>
    </ligand>
</feature>
<feature type="binding site" evidence="1">
    <location>
        <position position="273"/>
    </location>
    <ligand>
        <name>a protein</name>
        <dbReference type="ChEBI" id="CHEBI:16541"/>
    </ligand>
    <ligandPart>
        <name>N(omega),N(omega)'-dimethyl-L-arginine residue</name>
        <dbReference type="ChEBI" id="CHEBI:88221"/>
    </ligandPart>
</feature>
<feature type="binding site" evidence="1">
    <location>
        <position position="273"/>
    </location>
    <ligand>
        <name>a protein</name>
        <dbReference type="ChEBI" id="CHEBI:16541"/>
    </ligand>
    <ligandPart>
        <name>N(omega)-methyl-L-arginine residue</name>
        <dbReference type="ChEBI" id="CHEBI:65280"/>
    </ligandPart>
</feature>
<feature type="binding site" evidence="1">
    <location>
        <position position="316"/>
    </location>
    <ligand>
        <name>2-oxoglutarate</name>
        <dbReference type="ChEBI" id="CHEBI:16810"/>
    </ligand>
</feature>
<feature type="binding site" evidence="1">
    <location>
        <position position="316"/>
    </location>
    <ligand>
        <name>a protein</name>
        <dbReference type="ChEBI" id="CHEBI:16541"/>
    </ligand>
    <ligandPart>
        <name>N(omega),N(omega)'-dimethyl-L-arginine residue</name>
        <dbReference type="ChEBI" id="CHEBI:88221"/>
    </ligandPart>
</feature>
<feature type="binding site" evidence="1">
    <location>
        <position position="316"/>
    </location>
    <ligand>
        <name>a protein</name>
        <dbReference type="ChEBI" id="CHEBI:16541"/>
    </ligand>
    <ligandPart>
        <name>N(omega)-methyl-L-arginine residue</name>
        <dbReference type="ChEBI" id="CHEBI:65280"/>
    </ligandPart>
</feature>
<feature type="binding site" evidence="1">
    <location>
        <position position="319"/>
    </location>
    <ligand>
        <name>2-oxoglutarate</name>
        <dbReference type="ChEBI" id="CHEBI:16810"/>
    </ligand>
</feature>
<feature type="binding site" evidence="2">
    <location>
        <position position="319"/>
    </location>
    <ligand>
        <name>Fe cation</name>
        <dbReference type="ChEBI" id="CHEBI:24875"/>
        <note>catalytic</note>
    </ligand>
</feature>
<feature type="binding site" evidence="2">
    <location>
        <position position="321"/>
    </location>
    <ligand>
        <name>Fe cation</name>
        <dbReference type="ChEBI" id="CHEBI:24875"/>
        <note>catalytic</note>
    </ligand>
</feature>
<feature type="binding site" evidence="1">
    <location>
        <position position="325"/>
    </location>
    <ligand>
        <name>2-oxoglutarate</name>
        <dbReference type="ChEBI" id="CHEBI:16810"/>
    </ligand>
</feature>
<feature type="binding site" evidence="1">
    <location>
        <position position="334"/>
    </location>
    <ligand>
        <name>2-oxoglutarate</name>
        <dbReference type="ChEBI" id="CHEBI:16810"/>
    </ligand>
</feature>
<feature type="binding site" evidence="1">
    <location>
        <position position="398"/>
    </location>
    <ligand>
        <name>2-oxoglutarate</name>
        <dbReference type="ChEBI" id="CHEBI:16810"/>
    </ligand>
</feature>
<feature type="binding site" evidence="2">
    <location>
        <position position="398"/>
    </location>
    <ligand>
        <name>Fe cation</name>
        <dbReference type="ChEBI" id="CHEBI:24875"/>
        <note>catalytic</note>
    </ligand>
</feature>
<feature type="binding site" evidence="1">
    <location>
        <position position="412"/>
    </location>
    <ligand>
        <name>2-oxoglutarate</name>
        <dbReference type="ChEBI" id="CHEBI:16810"/>
    </ligand>
</feature>
<name>KDM8_MOUSE</name>
<comment type="function">
    <text evidence="1 4">Bifunctional enzyme that acts both as an endopeptidase and 2-oxoglutarate-dependent monooxygenase. Endopeptidase that cleaves histones N-terminal tails at the carboxyl side of methylated arginine or lysine residues, to generate 'tailless nucleosomes', which may trigger transcription elongation. Preferentially recognizes and cleaves monomethylated and dimethylated arginine residues of histones H2, H3 and H4. After initial cleavage, continues to digest histones tails via its aminopeptidase activity. Upon DNA damage, cleaves the N-terminal tail of histone H3 at monomethylated lysine residues, preferably at monomethylated 'Lys-9' (H3K9me1). The histone variant H3F3A is the major target for cleavage. Additionally, acts as a Fe(2+) and 2-oxoglutarate-dependent monooxygenase, catalyzing (R)-stereospecific hydroxylation at C-3 of 'Arg-137' of RPS6 and 'Arg-141' of RCCD1, but the biological significance of this activity remains to be established. Regulates mitosis through different mechanisms: Plays a role in transcriptional repression of satellite repeats, possibly by regulating H3K36 methylation levels in centromeric regions together with RCCD1. Possibly together with RCCD1, is involved in proper mitotic spindle organization and chromosome segregation. Negatively regulates cell cycle repressor CDKN1A/p21, which controls G1/S phase transition. Required for G2/M phase cell cycle progression. Regulates expression of CCNA1/cyclin-A1, leading to cancer cell proliferation. Also, plays a role in regulating alpha-tubulin acetylation and cytoskeletal microtubule stability involved in epithelial to mesenchymal transition (By similarity). Regulates the circadian gene expression in the liver (PubMed:30500822). Represses the transcriptional activator activity of the CLOCK-BMAL1 heterodimer in a catalytically-independent manner (By similarity). Negatively regulates the protein stability and function of CRY1; required for AMPK-FBXL3-induced CRY1 degradation (PubMed:30500822).</text>
</comment>
<comment type="catalytic activity">
    <reaction evidence="1">
        <text>L-arginyl-[protein] + 2-oxoglutarate + O2 = (3R)-3-hydroxy-L-arginyl-[protein] + succinate + CO2</text>
        <dbReference type="Rhea" id="RHEA:56744"/>
        <dbReference type="Rhea" id="RHEA-COMP:10532"/>
        <dbReference type="Rhea" id="RHEA-COMP:14712"/>
        <dbReference type="ChEBI" id="CHEBI:15379"/>
        <dbReference type="ChEBI" id="CHEBI:16526"/>
        <dbReference type="ChEBI" id="CHEBI:16810"/>
        <dbReference type="ChEBI" id="CHEBI:29965"/>
        <dbReference type="ChEBI" id="CHEBI:30031"/>
        <dbReference type="ChEBI" id="CHEBI:78294"/>
        <dbReference type="EC" id="1.14.11.73"/>
    </reaction>
</comment>
<comment type="cofactor">
    <cofactor evidence="1">
        <name>Fe(2+)</name>
        <dbReference type="ChEBI" id="CHEBI:29033"/>
    </cofactor>
    <text evidence="1">Binds 1 Fe(2+) ion per subunit.</text>
</comment>
<comment type="subunit">
    <text evidence="1 4">Can form homodimers (via JmjC domain). Found in a complex with RCCD1. Interacts (via N-terminus) with RCCD1 (via N-terminus); this interaction stimulates H3K36me3 and H3K36me2 demethylation. Interacts (via JmjC domain) with H3C1 (By similarity). Interacts with FBXL3 and PSMD2 (PubMed:30500822). Interacts with CRY1 in a FBXL3-dependent manner (PubMed:30500822).</text>
</comment>
<comment type="subcellular location">
    <subcellularLocation>
        <location evidence="1">Nucleus</location>
    </subcellularLocation>
    <subcellularLocation>
        <location evidence="1">Chromosome</location>
    </subcellularLocation>
    <text evidence="1">Colocalizes with trimethylated 'Lys-9' of histone H3 (H3K9me3).</text>
</comment>
<comment type="tissue specificity">
    <text evidence="4">Expressed in a circadian manner in the liver.</text>
</comment>
<comment type="disruption phenotype">
    <text evidence="4">Conditional knockout in liver leads to disruption of circadian gene expression in the liver.</text>
</comment>
<comment type="caution">
    <text evidence="1">The demethylase activity of JMJD5 is controversial. Demethylase activity towards H3K36me2 was observed in vivo and in vitro. In addition, demethylase activity towards H3K36me3 when in a complex with RCCD1 has been observed. In contrast, in other studies, JMJD5 was shown not to display any demethylase activity toward methylated H3K36 nor toward other methyllysines in the N-terminal tails of H3 and H4 in vitro.</text>
</comment>